<dbReference type="EC" id="2.4.2.17" evidence="1"/>
<dbReference type="EMBL" id="AY596297">
    <property type="protein sequence ID" value="AAV47588.1"/>
    <property type="molecule type" value="Genomic_DNA"/>
</dbReference>
<dbReference type="RefSeq" id="WP_004960442.1">
    <property type="nucleotide sequence ID" value="NZ_CP039138.1"/>
</dbReference>
<dbReference type="SMR" id="Q5UYR5"/>
<dbReference type="STRING" id="272569.rrnAC2835"/>
<dbReference type="PaxDb" id="272569-rrnAC2835"/>
<dbReference type="EnsemblBacteria" id="AAV47588">
    <property type="protein sequence ID" value="AAV47588"/>
    <property type="gene ID" value="rrnAC2835"/>
</dbReference>
<dbReference type="GeneID" id="64823864"/>
<dbReference type="KEGG" id="hma:rrnAC2835"/>
<dbReference type="PATRIC" id="fig|272569.17.peg.3408"/>
<dbReference type="eggNOG" id="arCOG02208">
    <property type="taxonomic scope" value="Archaea"/>
</dbReference>
<dbReference type="HOGENOM" id="CLU_038115_1_1_2"/>
<dbReference type="UniPathway" id="UPA00031">
    <property type="reaction ID" value="UER00006"/>
</dbReference>
<dbReference type="Proteomes" id="UP000001169">
    <property type="component" value="Chromosome I"/>
</dbReference>
<dbReference type="GO" id="GO:0005737">
    <property type="term" value="C:cytoplasm"/>
    <property type="evidence" value="ECO:0007669"/>
    <property type="project" value="UniProtKB-SubCell"/>
</dbReference>
<dbReference type="GO" id="GO:0005524">
    <property type="term" value="F:ATP binding"/>
    <property type="evidence" value="ECO:0007669"/>
    <property type="project" value="UniProtKB-KW"/>
</dbReference>
<dbReference type="GO" id="GO:0003879">
    <property type="term" value="F:ATP phosphoribosyltransferase activity"/>
    <property type="evidence" value="ECO:0007669"/>
    <property type="project" value="UniProtKB-UniRule"/>
</dbReference>
<dbReference type="GO" id="GO:0000287">
    <property type="term" value="F:magnesium ion binding"/>
    <property type="evidence" value="ECO:0007669"/>
    <property type="project" value="UniProtKB-UniRule"/>
</dbReference>
<dbReference type="GO" id="GO:0000105">
    <property type="term" value="P:L-histidine biosynthetic process"/>
    <property type="evidence" value="ECO:0007669"/>
    <property type="project" value="UniProtKB-UniRule"/>
</dbReference>
<dbReference type="FunFam" id="3.30.70.120:FF:000002">
    <property type="entry name" value="ATP phosphoribosyltransferase"/>
    <property type="match status" value="1"/>
</dbReference>
<dbReference type="FunFam" id="3.40.190.10:FF:000008">
    <property type="entry name" value="ATP phosphoribosyltransferase"/>
    <property type="match status" value="1"/>
</dbReference>
<dbReference type="Gene3D" id="3.30.70.120">
    <property type="match status" value="1"/>
</dbReference>
<dbReference type="Gene3D" id="3.40.190.10">
    <property type="entry name" value="Periplasmic binding protein-like II"/>
    <property type="match status" value="2"/>
</dbReference>
<dbReference type="HAMAP" id="MF_00079">
    <property type="entry name" value="HisG_Long"/>
    <property type="match status" value="1"/>
</dbReference>
<dbReference type="InterPro" id="IPR020621">
    <property type="entry name" value="ATP-PRT_HisG_long"/>
</dbReference>
<dbReference type="InterPro" id="IPR013820">
    <property type="entry name" value="ATP_PRibTrfase_cat"/>
</dbReference>
<dbReference type="InterPro" id="IPR018198">
    <property type="entry name" value="ATP_PRibTrfase_CS"/>
</dbReference>
<dbReference type="InterPro" id="IPR001348">
    <property type="entry name" value="ATP_PRibTrfase_HisG"/>
</dbReference>
<dbReference type="InterPro" id="IPR013115">
    <property type="entry name" value="HisG_C"/>
</dbReference>
<dbReference type="InterPro" id="IPR011322">
    <property type="entry name" value="N-reg_PII-like_a/b"/>
</dbReference>
<dbReference type="InterPro" id="IPR015867">
    <property type="entry name" value="N-reg_PII/ATP_PRibTrfase_C"/>
</dbReference>
<dbReference type="NCBIfam" id="TIGR00070">
    <property type="entry name" value="hisG"/>
    <property type="match status" value="1"/>
</dbReference>
<dbReference type="NCBIfam" id="TIGR03455">
    <property type="entry name" value="HisG_C-term"/>
    <property type="match status" value="1"/>
</dbReference>
<dbReference type="PANTHER" id="PTHR21403:SF10">
    <property type="entry name" value="ATP PHOSPHORIBOSYLTRANSFERASE"/>
    <property type="match status" value="1"/>
</dbReference>
<dbReference type="PANTHER" id="PTHR21403">
    <property type="entry name" value="ATP PHOSPHORIBOSYLTRANSFERASE ATP-PRTASE"/>
    <property type="match status" value="1"/>
</dbReference>
<dbReference type="Pfam" id="PF01634">
    <property type="entry name" value="HisG"/>
    <property type="match status" value="1"/>
</dbReference>
<dbReference type="Pfam" id="PF08029">
    <property type="entry name" value="HisG_C"/>
    <property type="match status" value="1"/>
</dbReference>
<dbReference type="SUPFAM" id="SSF54913">
    <property type="entry name" value="GlnB-like"/>
    <property type="match status" value="1"/>
</dbReference>
<dbReference type="SUPFAM" id="SSF53850">
    <property type="entry name" value="Periplasmic binding protein-like II"/>
    <property type="match status" value="1"/>
</dbReference>
<dbReference type="PROSITE" id="PS01316">
    <property type="entry name" value="ATP_P_PHORIBOSYLTR"/>
    <property type="match status" value="1"/>
</dbReference>
<protein>
    <recommendedName>
        <fullName evidence="1">ATP phosphoribosyltransferase</fullName>
        <shortName evidence="1">ATP-PRT</shortName>
        <shortName evidence="1">ATP-PRTase</shortName>
        <ecNumber evidence="1">2.4.2.17</ecNumber>
    </recommendedName>
</protein>
<keyword id="KW-0028">Amino-acid biosynthesis</keyword>
<keyword id="KW-0067">ATP-binding</keyword>
<keyword id="KW-0963">Cytoplasm</keyword>
<keyword id="KW-0328">Glycosyltransferase</keyword>
<keyword id="KW-0368">Histidine biosynthesis</keyword>
<keyword id="KW-0460">Magnesium</keyword>
<keyword id="KW-0479">Metal-binding</keyword>
<keyword id="KW-0547">Nucleotide-binding</keyword>
<keyword id="KW-1185">Reference proteome</keyword>
<keyword id="KW-0808">Transferase</keyword>
<gene>
    <name evidence="1" type="primary">hisG</name>
    <name type="ordered locus">rrnAC2835</name>
</gene>
<proteinExistence type="inferred from homology"/>
<reference key="1">
    <citation type="journal article" date="2004" name="Genome Res.">
        <title>Genome sequence of Haloarcula marismortui: a halophilic archaeon from the Dead Sea.</title>
        <authorList>
            <person name="Baliga N.S."/>
            <person name="Bonneau R."/>
            <person name="Facciotti M.T."/>
            <person name="Pan M."/>
            <person name="Glusman G."/>
            <person name="Deutsch E.W."/>
            <person name="Shannon P."/>
            <person name="Chiu Y."/>
            <person name="Weng R.S."/>
            <person name="Gan R.R."/>
            <person name="Hung P."/>
            <person name="Date S.V."/>
            <person name="Marcotte E."/>
            <person name="Hood L."/>
            <person name="Ng W.V."/>
        </authorList>
    </citation>
    <scope>NUCLEOTIDE SEQUENCE [LARGE SCALE GENOMIC DNA]</scope>
    <source>
        <strain>ATCC 43049 / DSM 3752 / JCM 8966 / VKM B-1809</strain>
    </source>
</reference>
<sequence length="282" mass="30777">MRIAVPNKGRLHEPSEELLERAGLHLVDGADRQLHADTVDPDVTVLYARAADIPEYVADGAADVGITGLDQVRESDTDDLVELRDLDFGRCRLVLAAPEESDIETVYDFEDGRIATEFPKITRRYFDRVDVDVDVTEVSGATELTPHVDIADGIVDITSTGTTLRMNRLAVVDEVLESSVRLFAREDTADNEKVKQVDTALGSVLAADDKRYLMMNAPEDALDDVKDVLPGMGGPTVMDIAGSDQLAVHAVVEERAVFETISSLKDVGASDILVTEIERLVE</sequence>
<organism>
    <name type="scientific">Haloarcula marismortui (strain ATCC 43049 / DSM 3752 / JCM 8966 / VKM B-1809)</name>
    <name type="common">Halobacterium marismortui</name>
    <dbReference type="NCBI Taxonomy" id="272569"/>
    <lineage>
        <taxon>Archaea</taxon>
        <taxon>Methanobacteriati</taxon>
        <taxon>Methanobacteriota</taxon>
        <taxon>Stenosarchaea group</taxon>
        <taxon>Halobacteria</taxon>
        <taxon>Halobacteriales</taxon>
        <taxon>Haloarculaceae</taxon>
        <taxon>Haloarcula</taxon>
    </lineage>
</organism>
<accession>Q5UYR5</accession>
<name>HIS1_HALMA</name>
<feature type="chain" id="PRO_0000151879" description="ATP phosphoribosyltransferase">
    <location>
        <begin position="1"/>
        <end position="282"/>
    </location>
</feature>
<comment type="function">
    <text evidence="1">Catalyzes the condensation of ATP and 5-phosphoribose 1-diphosphate to form N'-(5'-phosphoribosyl)-ATP (PR-ATP). Has a crucial role in the pathway because the rate of histidine biosynthesis seems to be controlled primarily by regulation of HisG enzymatic activity.</text>
</comment>
<comment type="catalytic activity">
    <reaction evidence="1">
        <text>1-(5-phospho-beta-D-ribosyl)-ATP + diphosphate = 5-phospho-alpha-D-ribose 1-diphosphate + ATP</text>
        <dbReference type="Rhea" id="RHEA:18473"/>
        <dbReference type="ChEBI" id="CHEBI:30616"/>
        <dbReference type="ChEBI" id="CHEBI:33019"/>
        <dbReference type="ChEBI" id="CHEBI:58017"/>
        <dbReference type="ChEBI" id="CHEBI:73183"/>
        <dbReference type="EC" id="2.4.2.17"/>
    </reaction>
</comment>
<comment type="cofactor">
    <cofactor evidence="1">
        <name>Mg(2+)</name>
        <dbReference type="ChEBI" id="CHEBI:18420"/>
    </cofactor>
</comment>
<comment type="activity regulation">
    <text evidence="1">Feedback inhibited by histidine.</text>
</comment>
<comment type="pathway">
    <text evidence="1">Amino-acid biosynthesis; L-histidine biosynthesis; L-histidine from 5-phospho-alpha-D-ribose 1-diphosphate: step 1/9.</text>
</comment>
<comment type="subcellular location">
    <subcellularLocation>
        <location evidence="1">Cytoplasm</location>
    </subcellularLocation>
</comment>
<comment type="similarity">
    <text evidence="1">Belongs to the ATP phosphoribosyltransferase family. Long subfamily.</text>
</comment>
<evidence type="ECO:0000255" key="1">
    <source>
        <dbReference type="HAMAP-Rule" id="MF_00079"/>
    </source>
</evidence>